<name>FATB_VIBA7</name>
<gene>
    <name evidence="5" type="primary">fatB</name>
</gene>
<reference key="1">
    <citation type="journal article" date="1988" name="J. Biol. Chem.">
        <title>Genetic and molecular characterization of essential components of the Vibrio anguillarum plasmid-mediated iron-transport system.</title>
        <authorList>
            <person name="Actis L.A."/>
            <person name="Tolmasky M.E."/>
            <person name="Farrell D.H."/>
            <person name="Crosa J.H."/>
        </authorList>
    </citation>
    <scope>NUCLEOTIDE SEQUENCE [GENOMIC DNA]</scope>
    <source>
        <strain>ATCC 68554 / 775</strain>
    </source>
</reference>
<reference key="2">
    <citation type="journal article" date="2003" name="J. Bacteriol.">
        <title>Complete sequence of virulence plasmid pJM1 from the marine fish pathogen Vibrio anguillarum strain 775.</title>
        <authorList>
            <person name="Di Lorenzo M."/>
            <person name="Stork M."/>
            <person name="Tolmasky M.E."/>
            <person name="Actis L.A."/>
            <person name="Farrell D."/>
            <person name="Welch T.J."/>
            <person name="Crosa L.M."/>
            <person name="Wertheimer A.M."/>
            <person name="Chen Q."/>
            <person name="Salinas P."/>
            <person name="Waldbeser L."/>
            <person name="Crosa J.H."/>
        </authorList>
    </citation>
    <scope>NUCLEOTIDE SEQUENCE [LARGE SCALE GENOMIC DNA]</scope>
    <source>
        <strain>ATCC 68554 / 775</strain>
    </source>
</reference>
<reference key="3">
    <citation type="journal article" date="2011" name="Infect. Immun.">
        <title>Complete genome sequence of the marine fish pathogen Vibrio anguillarum harboring the pJM1 virulence plasmid and genomic comparison with other virulent strains of V. anguillarum and V. ordalii.</title>
        <authorList>
            <person name="Naka H."/>
            <person name="Dias G.M."/>
            <person name="Thompson C.C."/>
            <person name="Dubay C."/>
            <person name="Thompson F.L."/>
            <person name="Crosa J.H."/>
        </authorList>
    </citation>
    <scope>NUCLEOTIDE SEQUENCE [LARGE SCALE GENOMIC DNA]</scope>
    <source>
        <strain>ATCC 68554 / 775</strain>
    </source>
</reference>
<reference key="4">
    <citation type="journal article" date="1991" name="J. Biol. Chem.">
        <title>Molecular characterization of the iron transport system mediated by the pJM1 plasmid in Vibrio anguillarum 775.</title>
        <authorList>
            <person name="Koester W.L."/>
            <person name="Actis L.A."/>
            <person name="Waldbeser L.S."/>
            <person name="Tolmasky M.E."/>
            <person name="Crosa J.H."/>
        </authorList>
    </citation>
    <scope>NUCLEOTIDE SEQUENCE [GENOMIC DNA] OF 1-154</scope>
    <scope>DISRUPTION PHENOTYPE</scope>
    <scope>FUNCTION</scope>
    <scope>SUBUNIT</scope>
    <source>
        <strain>ATCC 68554 / 775</strain>
    </source>
</reference>
<reference key="5">
    <citation type="journal article" date="2010" name="Environ. Microbiol. Rep.">
        <title>Role of the pJM1 plasmid-encoded transport proteins FatB, C and D in ferric anguibactin uptake in the fish pathogen Vibrio anguillarum.</title>
        <authorList>
            <person name="Naka H."/>
            <person name="Lopez C.S."/>
            <person name="Crosa J.H."/>
        </authorList>
    </citation>
    <scope>FUNCTION</scope>
    <scope>SUBCELLULAR LOCATION</scope>
    <scope>MUTAGENESIS OF CYS-23</scope>
    <source>
        <strain>ATCC 68554 / 775</strain>
    </source>
</reference>
<organism>
    <name type="scientific">Vibrio anguillarum (strain ATCC 68554 / 775)</name>
    <name type="common">Listonella anguillarum</name>
    <dbReference type="NCBI Taxonomy" id="882102"/>
    <lineage>
        <taxon>Bacteria</taxon>
        <taxon>Pseudomonadati</taxon>
        <taxon>Pseudomonadota</taxon>
        <taxon>Gammaproteobacteria</taxon>
        <taxon>Vibrionales</taxon>
        <taxon>Vibrionaceae</taxon>
        <taxon>Vibrio</taxon>
    </lineage>
</organism>
<protein>
    <recommendedName>
        <fullName evidence="6">Ferric-anguibactin-binding protein FatB</fullName>
    </recommendedName>
</protein>
<accession>P11460</accession>
<comment type="function">
    <text evidence="3 4">Involved in the uptake of iron in complex with the siderophore anguibactin. Binds ferric-anguibactin in the periplasm and mediates its transport into the cytoplasm.</text>
</comment>
<comment type="subunit">
    <text evidence="7">Part of an iron transport system composed of the outer membrane receptor FatA, the periplasmic binding protein FatB and the inner membrane proteins FatC and FatD.</text>
</comment>
<comment type="subcellular location">
    <subcellularLocation>
        <location evidence="4">Cell inner membrane</location>
        <topology evidence="4">Lipid-anchor</topology>
        <orientation evidence="4">Periplasmic side</orientation>
    </subcellularLocation>
    <text evidence="4">The lipoprotein nature of FatB is not essential for activity.</text>
</comment>
<comment type="disruption phenotype">
    <text evidence="3">Mutants are unable to grow under iron-limiting conditions.</text>
</comment>
<comment type="similarity">
    <text evidence="6">Belongs to the bacterial solute-binding protein 8 family.</text>
</comment>
<keyword id="KW-0997">Cell inner membrane</keyword>
<keyword id="KW-1003">Cell membrane</keyword>
<keyword id="KW-0406">Ion transport</keyword>
<keyword id="KW-0408">Iron</keyword>
<keyword id="KW-0410">Iron transport</keyword>
<keyword id="KW-0449">Lipoprotein</keyword>
<keyword id="KW-0472">Membrane</keyword>
<keyword id="KW-0564">Palmitate</keyword>
<keyword id="KW-0614">Plasmid</keyword>
<keyword id="KW-0732">Signal</keyword>
<keyword id="KW-0813">Transport</keyword>
<proteinExistence type="evidence at protein level"/>
<feature type="signal peptide" evidence="1">
    <location>
        <begin position="1"/>
        <end position="22"/>
    </location>
</feature>
<feature type="chain" id="PRO_0000031819" description="Ferric-anguibactin-binding protein FatB">
    <location>
        <begin position="23"/>
        <end position="322"/>
    </location>
</feature>
<feature type="domain" description="Fe/B12 periplasmic-binding" evidence="2">
    <location>
        <begin position="57"/>
        <end position="322"/>
    </location>
</feature>
<feature type="lipid moiety-binding region" description="N-palmitoyl cysteine" evidence="1">
    <location>
        <position position="23"/>
    </location>
</feature>
<feature type="lipid moiety-binding region" description="S-diacylglycerol cysteine" evidence="1">
    <location>
        <position position="23"/>
    </location>
</feature>
<feature type="mutagenesis site" description="Localizes mainly in the periplasmic fraction and not in the membrane fraction. Does not affect ferric-anguibactin uptake." evidence="4">
    <original>C</original>
    <variation>A</variation>
    <location>
        <position position="23"/>
    </location>
</feature>
<geneLocation type="plasmid">
    <name>pJM1</name>
</geneLocation>
<evidence type="ECO:0000255" key="1">
    <source>
        <dbReference type="PROSITE-ProRule" id="PRU00303"/>
    </source>
</evidence>
<evidence type="ECO:0000255" key="2">
    <source>
        <dbReference type="PROSITE-ProRule" id="PRU00344"/>
    </source>
</evidence>
<evidence type="ECO:0000269" key="3">
    <source>
    </source>
</evidence>
<evidence type="ECO:0000269" key="4">
    <source>
    </source>
</evidence>
<evidence type="ECO:0000303" key="5">
    <source>
    </source>
</evidence>
<evidence type="ECO:0000305" key="6"/>
<evidence type="ECO:0000305" key="7">
    <source>
    </source>
</evidence>
<sequence length="322" mass="35635">MFKSTLNIAVAIVCSSLVTLTGCEPKVAQSQVIQPLETPIVIEHNLGQTVISNRPQRVAALDMNEVDFLDQLNVPIAGMVKDFVPHFLEKYKNTPDISDLGAIVQPNMEKIYALKPDLVLMTPLHANQYEELSKLAPTVHFDIDFRNSHGHHVDIIKQHVIDLGEIFNKQTLAQKKVAEIDAKVDEVQALTAERSEKALVVMHNNGSFSSFGIESRYGFVFDVLGVKPASTEIAASLHGQPISSEFINQANPDILYIIDRTAVMEGKPVIDAEHLANPLLRQTKAWKNGKVIFVDADAWYITSASITSLKIVIDDIIKGYQS</sequence>
<dbReference type="EMBL" id="AY312585">
    <property type="protein sequence ID" value="AAR12526.1"/>
    <property type="molecule type" value="Genomic_DNA"/>
</dbReference>
<dbReference type="PIR" id="A29928">
    <property type="entry name" value="A29928"/>
</dbReference>
<dbReference type="RefSeq" id="NP_943551.1">
    <property type="nucleotide sequence ID" value="NC_005250.1"/>
</dbReference>
<dbReference type="RefSeq" id="WP_011154637.1">
    <property type="nucleotide sequence ID" value="NC_005250.1"/>
</dbReference>
<dbReference type="SMR" id="P11460"/>
<dbReference type="eggNOG" id="COG4607">
    <property type="taxonomic scope" value="Bacteria"/>
</dbReference>
<dbReference type="GO" id="GO:0030288">
    <property type="term" value="C:outer membrane-bounded periplasmic space"/>
    <property type="evidence" value="ECO:0007669"/>
    <property type="project" value="TreeGrafter"/>
</dbReference>
<dbReference type="GO" id="GO:0005886">
    <property type="term" value="C:plasma membrane"/>
    <property type="evidence" value="ECO:0007669"/>
    <property type="project" value="UniProtKB-SubCell"/>
</dbReference>
<dbReference type="GO" id="GO:1901678">
    <property type="term" value="P:iron coordination entity transport"/>
    <property type="evidence" value="ECO:0007669"/>
    <property type="project" value="UniProtKB-ARBA"/>
</dbReference>
<dbReference type="CDD" id="cd01140">
    <property type="entry name" value="FatB"/>
    <property type="match status" value="1"/>
</dbReference>
<dbReference type="Gene3D" id="3.40.50.1980">
    <property type="entry name" value="Nitrogenase molybdenum iron protein domain"/>
    <property type="match status" value="2"/>
</dbReference>
<dbReference type="InterPro" id="IPR002491">
    <property type="entry name" value="ABC_transptr_periplasmic_BD"/>
</dbReference>
<dbReference type="InterPro" id="IPR051313">
    <property type="entry name" value="Bact_iron-sidero_bind"/>
</dbReference>
<dbReference type="InterPro" id="IPR033870">
    <property type="entry name" value="FatB"/>
</dbReference>
<dbReference type="PANTHER" id="PTHR30532">
    <property type="entry name" value="IRON III DICITRATE-BINDING PERIPLASMIC PROTEIN"/>
    <property type="match status" value="1"/>
</dbReference>
<dbReference type="PANTHER" id="PTHR30532:SF28">
    <property type="entry name" value="PETROBACTIN-BINDING PROTEIN YCLQ"/>
    <property type="match status" value="1"/>
</dbReference>
<dbReference type="Pfam" id="PF01497">
    <property type="entry name" value="Peripla_BP_2"/>
    <property type="match status" value="1"/>
</dbReference>
<dbReference type="SUPFAM" id="SSF53807">
    <property type="entry name" value="Helical backbone' metal receptor"/>
    <property type="match status" value="1"/>
</dbReference>
<dbReference type="PROSITE" id="PS50983">
    <property type="entry name" value="FE_B12_PBP"/>
    <property type="match status" value="1"/>
</dbReference>
<dbReference type="PROSITE" id="PS51257">
    <property type="entry name" value="PROKAR_LIPOPROTEIN"/>
    <property type="match status" value="1"/>
</dbReference>